<protein>
    <recommendedName>
        <fullName evidence="3">Phospholipid phosphatase 5</fullName>
        <ecNumber evidence="3">3.1.3.4</ecNumber>
        <ecNumber evidence="3">3.6.1.75</ecNumber>
    </recommendedName>
</protein>
<feature type="chain" id="PRO_0000286947" description="Phospholipid phosphatase 5">
    <location>
        <begin position="1"/>
        <end position="266"/>
    </location>
</feature>
<feature type="topological domain" description="Cytoplasmic" evidence="6">
    <location>
        <begin position="1"/>
        <end position="4"/>
    </location>
</feature>
<feature type="transmembrane region" description="Helical" evidence="4">
    <location>
        <begin position="5"/>
        <end position="25"/>
    </location>
</feature>
<feature type="topological domain" description="Extracellular" evidence="2">
    <location>
        <begin position="26"/>
        <end position="53"/>
    </location>
</feature>
<feature type="transmembrane region" description="Helical" evidence="4">
    <location>
        <begin position="54"/>
        <end position="74"/>
    </location>
</feature>
<feature type="topological domain" description="Cytoplasmic" evidence="2">
    <location>
        <begin position="75"/>
        <end position="89"/>
    </location>
</feature>
<feature type="transmembrane region" description="Helical" evidence="4">
    <location>
        <begin position="90"/>
        <end position="110"/>
    </location>
</feature>
<feature type="topological domain" description="Extracellular" evidence="2">
    <location>
        <begin position="111"/>
        <end position="146"/>
    </location>
</feature>
<feature type="transmembrane region" description="Helical" evidence="4">
    <location>
        <begin position="147"/>
        <end position="167"/>
    </location>
</feature>
<feature type="topological domain" description="Cytoplasmic" evidence="2">
    <location>
        <begin position="168"/>
        <end position="178"/>
    </location>
</feature>
<feature type="transmembrane region" description="Helical" evidence="4">
    <location>
        <begin position="179"/>
        <end position="199"/>
    </location>
</feature>
<feature type="topological domain" description="Extracellular" evidence="2">
    <location>
        <begin position="200"/>
        <end position="206"/>
    </location>
</feature>
<feature type="transmembrane region" description="Helical" evidence="4">
    <location>
        <begin position="207"/>
        <end position="227"/>
    </location>
</feature>
<feature type="topological domain" description="Cytoplasmic" evidence="2">
    <location>
        <begin position="228"/>
        <end position="266"/>
    </location>
</feature>
<feature type="region of interest" description="Phosphatase sequence motif I" evidence="3">
    <location>
        <begin position="107"/>
        <end position="115"/>
    </location>
</feature>
<feature type="region of interest" description="Phosphatase sequence motif II" evidence="3">
    <location>
        <begin position="148"/>
        <end position="151"/>
    </location>
</feature>
<feature type="region of interest" description="Phosphatase sequence motif III" evidence="3">
    <location>
        <begin position="200"/>
        <end position="210"/>
    </location>
</feature>
<feature type="region of interest" description="Disordered" evidence="5">
    <location>
        <begin position="246"/>
        <end position="266"/>
    </location>
</feature>
<feature type="active site" description="Proton donors" evidence="1">
    <location>
        <position position="151"/>
    </location>
</feature>
<feature type="active site" description="Nucleophile" evidence="1">
    <location>
        <position position="207"/>
    </location>
</feature>
<feature type="site" description="Stabilizes the active site histidine for nucleophilic attack" evidence="1">
    <location>
        <position position="211"/>
    </location>
</feature>
<comment type="function">
    <text evidence="3">Magnesium-independent phospholipid phosphatase with broad substrate specificity. Preferentially catalyzes the conversion of diacylglycerol pyrophosphate into phosphatidate but can also act on phosphatidate and lysophosphatidate. Phospholipid phosphatases are involved in both the synthesis of lipids and the generation or degradation of lipid-signaling molecules.</text>
</comment>
<comment type="catalytic activity">
    <reaction evidence="3">
        <text>a 1,2-diacyl-sn-glycerol 3-diphosphate + H2O = a 1,2-diacyl-sn-glycero-3-phosphate + phosphate + H(+)</text>
        <dbReference type="Rhea" id="RHEA:27449"/>
        <dbReference type="ChEBI" id="CHEBI:15377"/>
        <dbReference type="ChEBI" id="CHEBI:15378"/>
        <dbReference type="ChEBI" id="CHEBI:43474"/>
        <dbReference type="ChEBI" id="CHEBI:58608"/>
        <dbReference type="ChEBI" id="CHEBI:59996"/>
        <dbReference type="EC" id="3.6.1.75"/>
    </reaction>
    <physiologicalReaction direction="left-to-right" evidence="3">
        <dbReference type="Rhea" id="RHEA:27450"/>
    </physiologicalReaction>
</comment>
<comment type="catalytic activity">
    <reaction evidence="3">
        <text>a 1,2-diacyl-sn-glycero-3-phosphate + H2O = a 1,2-diacyl-sn-glycerol + phosphate</text>
        <dbReference type="Rhea" id="RHEA:27429"/>
        <dbReference type="ChEBI" id="CHEBI:15377"/>
        <dbReference type="ChEBI" id="CHEBI:17815"/>
        <dbReference type="ChEBI" id="CHEBI:43474"/>
        <dbReference type="ChEBI" id="CHEBI:58608"/>
        <dbReference type="EC" id="3.1.3.4"/>
    </reaction>
    <physiologicalReaction direction="left-to-right" evidence="3">
        <dbReference type="Rhea" id="RHEA:27430"/>
    </physiologicalReaction>
</comment>
<comment type="catalytic activity">
    <reaction evidence="3">
        <text>1,2-dioctanoyl-sn-glycero-3-diphosphate + H2O = 1,2-dioctanoyl-sn-glycero-3-phosphate + phosphate + H(+)</text>
        <dbReference type="Rhea" id="RHEA:42856"/>
        <dbReference type="ChEBI" id="CHEBI:15377"/>
        <dbReference type="ChEBI" id="CHEBI:15378"/>
        <dbReference type="ChEBI" id="CHEBI:43474"/>
        <dbReference type="ChEBI" id="CHEBI:78229"/>
        <dbReference type="ChEBI" id="CHEBI:82765"/>
    </reaction>
    <physiologicalReaction direction="left-to-right" evidence="3">
        <dbReference type="Rhea" id="RHEA:42857"/>
    </physiologicalReaction>
</comment>
<comment type="catalytic activity">
    <reaction evidence="3">
        <text>1,2-dioctanoyl-sn-glycero-3-phosphate + H2O = 1,2-dioctanoyl-sn-glycerol + phosphate</text>
        <dbReference type="Rhea" id="RHEA:42860"/>
        <dbReference type="ChEBI" id="CHEBI:15377"/>
        <dbReference type="ChEBI" id="CHEBI:43474"/>
        <dbReference type="ChEBI" id="CHEBI:76979"/>
        <dbReference type="ChEBI" id="CHEBI:78229"/>
    </reaction>
    <physiologicalReaction direction="left-to-right" evidence="3">
        <dbReference type="Rhea" id="RHEA:42861"/>
    </physiologicalReaction>
</comment>
<comment type="catalytic activity">
    <reaction evidence="3">
        <text>1-(9Z-octadecenoyl)-sn-glycero-3-phosphate + H2O = 1-(9Z-octadecenoyl)-sn-glycerol + phosphate</text>
        <dbReference type="Rhea" id="RHEA:39835"/>
        <dbReference type="ChEBI" id="CHEBI:15377"/>
        <dbReference type="ChEBI" id="CHEBI:43474"/>
        <dbReference type="ChEBI" id="CHEBI:74544"/>
        <dbReference type="ChEBI" id="CHEBI:75757"/>
    </reaction>
    <physiologicalReaction direction="left-to-right" evidence="3">
        <dbReference type="Rhea" id="RHEA:39836"/>
    </physiologicalReaction>
</comment>
<comment type="activity regulation">
    <text evidence="3">Magnesium-independent phospholipid phosphatase. Inhibited by N-ethylmaleimide.</text>
</comment>
<comment type="pathway">
    <text evidence="3">Lipid metabolism; phospholipid metabolism.</text>
</comment>
<comment type="subcellular location">
    <subcellularLocation>
        <location evidence="2">Cell membrane</location>
        <topology evidence="2">Multi-pass membrane protein</topology>
    </subcellularLocation>
</comment>
<comment type="similarity">
    <text evidence="6">Belongs to the PA-phosphatase related phosphoesterase family.</text>
</comment>
<comment type="sequence caution" evidence="6">
    <conflict type="erroneous initiation">
        <sequence resource="EMBL-CDS" id="AAH72886"/>
    </conflict>
    <text>Truncated N-terminus.</text>
</comment>
<reference key="1">
    <citation type="submission" date="2004-06" db="EMBL/GenBank/DDBJ databases">
        <authorList>
            <consortium name="NIH - Xenopus Gene Collection (XGC) project"/>
        </authorList>
    </citation>
    <scope>NUCLEOTIDE SEQUENCE [LARGE SCALE MRNA]</scope>
    <source>
        <tissue>Ovary</tissue>
    </source>
</reference>
<dbReference type="EC" id="3.1.3.4" evidence="3"/>
<dbReference type="EC" id="3.6.1.75" evidence="3"/>
<dbReference type="EMBL" id="BC072886">
    <property type="protein sequence ID" value="AAH72886.1"/>
    <property type="status" value="ALT_INIT"/>
    <property type="molecule type" value="mRNA"/>
</dbReference>
<dbReference type="RefSeq" id="NP_001085524.2">
    <property type="nucleotide sequence ID" value="NM_001092055.1"/>
</dbReference>
<dbReference type="RefSeq" id="XP_018106412.1">
    <property type="nucleotide sequence ID" value="XM_018250923.1"/>
</dbReference>
<dbReference type="SMR" id="Q6GQ62"/>
<dbReference type="DNASU" id="443950"/>
<dbReference type="GeneID" id="443950"/>
<dbReference type="KEGG" id="xla:443950"/>
<dbReference type="AGR" id="Xenbase:XB-GENE-6251520"/>
<dbReference type="CTD" id="443950"/>
<dbReference type="Xenbase" id="XB-GENE-6251520">
    <property type="gene designation" value="plpp5.L"/>
</dbReference>
<dbReference type="OMA" id="EDTIPMW"/>
<dbReference type="OrthoDB" id="10030083at2759"/>
<dbReference type="UniPathway" id="UPA00085"/>
<dbReference type="Proteomes" id="UP000186698">
    <property type="component" value="Chromosome 3L"/>
</dbReference>
<dbReference type="Bgee" id="443950">
    <property type="expression patterns" value="Expressed in liver and 19 other cell types or tissues"/>
</dbReference>
<dbReference type="GO" id="GO:0016020">
    <property type="term" value="C:membrane"/>
    <property type="evidence" value="ECO:0000318"/>
    <property type="project" value="GO_Central"/>
</dbReference>
<dbReference type="GO" id="GO:0005886">
    <property type="term" value="C:plasma membrane"/>
    <property type="evidence" value="ECO:0007669"/>
    <property type="project" value="UniProtKB-SubCell"/>
</dbReference>
<dbReference type="GO" id="GO:0000810">
    <property type="term" value="F:diacylglycerol diphosphate phosphatase activity"/>
    <property type="evidence" value="ECO:0007669"/>
    <property type="project" value="RHEA"/>
</dbReference>
<dbReference type="GO" id="GO:0008195">
    <property type="term" value="F:phosphatidate phosphatase activity"/>
    <property type="evidence" value="ECO:0000318"/>
    <property type="project" value="GO_Central"/>
</dbReference>
<dbReference type="GO" id="GO:0046839">
    <property type="term" value="P:phospholipid dephosphorylation"/>
    <property type="evidence" value="ECO:0000318"/>
    <property type="project" value="GO_Central"/>
</dbReference>
<dbReference type="GO" id="GO:0006644">
    <property type="term" value="P:phospholipid metabolic process"/>
    <property type="evidence" value="ECO:0000318"/>
    <property type="project" value="GO_Central"/>
</dbReference>
<dbReference type="CDD" id="cd03390">
    <property type="entry name" value="PAP2_containing_1_like"/>
    <property type="match status" value="1"/>
</dbReference>
<dbReference type="FunFam" id="1.20.144.10:FF:000099">
    <property type="entry name" value="LOC100158576 protein"/>
    <property type="match status" value="1"/>
</dbReference>
<dbReference type="Gene3D" id="1.20.144.10">
    <property type="entry name" value="Phosphatidic acid phosphatase type 2/haloperoxidase"/>
    <property type="match status" value="1"/>
</dbReference>
<dbReference type="InterPro" id="IPR036938">
    <property type="entry name" value="P_Acid_Pase_2/haloperoxi_sf"/>
</dbReference>
<dbReference type="InterPro" id="IPR000326">
    <property type="entry name" value="P_Acid_Pase_2/haloperoxidase"/>
</dbReference>
<dbReference type="InterPro" id="IPR043216">
    <property type="entry name" value="PA_PP_rel"/>
</dbReference>
<dbReference type="PANTHER" id="PTHR10165">
    <property type="entry name" value="LIPID PHOSPHATE PHOSPHATASE"/>
    <property type="match status" value="1"/>
</dbReference>
<dbReference type="PANTHER" id="PTHR10165:SF87">
    <property type="entry name" value="PHOSPHOLIPID PHOSPHATASE 5"/>
    <property type="match status" value="1"/>
</dbReference>
<dbReference type="Pfam" id="PF01569">
    <property type="entry name" value="PAP2"/>
    <property type="match status" value="1"/>
</dbReference>
<dbReference type="SMART" id="SM00014">
    <property type="entry name" value="acidPPc"/>
    <property type="match status" value="1"/>
</dbReference>
<dbReference type="SUPFAM" id="SSF48317">
    <property type="entry name" value="Acid phosphatase/Vanadium-dependent haloperoxidase"/>
    <property type="match status" value="1"/>
</dbReference>
<proteinExistence type="evidence at transcript level"/>
<name>PLPP5_XENLA</name>
<gene>
    <name evidence="3" type="primary">plpp5</name>
</gene>
<keyword id="KW-1003">Cell membrane</keyword>
<keyword id="KW-0378">Hydrolase</keyword>
<keyword id="KW-0443">Lipid metabolism</keyword>
<keyword id="KW-0472">Membrane</keyword>
<keyword id="KW-1185">Reference proteome</keyword>
<keyword id="KW-0812">Transmembrane</keyword>
<keyword id="KW-1133">Transmembrane helix</keyword>
<accession>Q6GQ62</accession>
<organism>
    <name type="scientific">Xenopus laevis</name>
    <name type="common">African clawed frog</name>
    <dbReference type="NCBI Taxonomy" id="8355"/>
    <lineage>
        <taxon>Eukaryota</taxon>
        <taxon>Metazoa</taxon>
        <taxon>Chordata</taxon>
        <taxon>Craniata</taxon>
        <taxon>Vertebrata</taxon>
        <taxon>Euteleostomi</taxon>
        <taxon>Amphibia</taxon>
        <taxon>Batrachia</taxon>
        <taxon>Anura</taxon>
        <taxon>Pipoidea</taxon>
        <taxon>Pipidae</taxon>
        <taxon>Xenopodinae</taxon>
        <taxon>Xenopus</taxon>
        <taxon>Xenopus</taxon>
    </lineage>
</organism>
<evidence type="ECO:0000250" key="1">
    <source>
        <dbReference type="UniProtKB" id="O34349"/>
    </source>
</evidence>
<evidence type="ECO:0000250" key="2">
    <source>
        <dbReference type="UniProtKB" id="Q3UMZ3"/>
    </source>
</evidence>
<evidence type="ECO:0000250" key="3">
    <source>
        <dbReference type="UniProtKB" id="Q8NEB5"/>
    </source>
</evidence>
<evidence type="ECO:0000255" key="4"/>
<evidence type="ECO:0000256" key="5">
    <source>
        <dbReference type="SAM" id="MobiDB-lite"/>
    </source>
</evidence>
<evidence type="ECO:0000305" key="6"/>
<sequence>MDKRILEGFAAEFIIRLLLFGIFLISETMHPFERVIQPEEMWLYRNPYVVSDRIPTNSMFLISFLTPLSVVALARLFWKADGTDSREAGLAASLSLALNGIFTNTVKLIVGRPRPDFLFRCFPDGQESPGLHCTGDPELVIEGRKSFPSGHSSFAFAGLGFTALYLAGKLRCFSPCGRGHSWRLCASLIPLLCAIAIALSRTCDYKHHWQDVVVGAFIGLFFAFLCYRQYYPSLVERDCHQPYRNKGRMSGAQERKLSTPGYSLDV</sequence>